<evidence type="ECO:0000255" key="1">
    <source>
        <dbReference type="HAMAP-Rule" id="MF_01131"/>
    </source>
</evidence>
<protein>
    <recommendedName>
        <fullName evidence="1">Redox-sensing transcriptional repressor Rex</fullName>
    </recommendedName>
</protein>
<dbReference type="EMBL" id="CP000002">
    <property type="protein sequence ID" value="AAU22207.1"/>
    <property type="molecule type" value="Genomic_DNA"/>
</dbReference>
<dbReference type="EMBL" id="AE017333">
    <property type="protein sequence ID" value="AAU39560.1"/>
    <property type="molecule type" value="Genomic_DNA"/>
</dbReference>
<dbReference type="RefSeq" id="WP_003179237.1">
    <property type="nucleotide sequence ID" value="NC_006322.1"/>
</dbReference>
<dbReference type="SMR" id="Q65N04"/>
<dbReference type="STRING" id="279010.BL00847"/>
<dbReference type="KEGG" id="bld:BLi00618"/>
<dbReference type="KEGG" id="bli:BL00847"/>
<dbReference type="eggNOG" id="COG2344">
    <property type="taxonomic scope" value="Bacteria"/>
</dbReference>
<dbReference type="HOGENOM" id="CLU_061534_1_1_9"/>
<dbReference type="Proteomes" id="UP000000606">
    <property type="component" value="Chromosome"/>
</dbReference>
<dbReference type="GO" id="GO:0005737">
    <property type="term" value="C:cytoplasm"/>
    <property type="evidence" value="ECO:0007669"/>
    <property type="project" value="UniProtKB-SubCell"/>
</dbReference>
<dbReference type="GO" id="GO:0003677">
    <property type="term" value="F:DNA binding"/>
    <property type="evidence" value="ECO:0007669"/>
    <property type="project" value="UniProtKB-UniRule"/>
</dbReference>
<dbReference type="GO" id="GO:0003700">
    <property type="term" value="F:DNA-binding transcription factor activity"/>
    <property type="evidence" value="ECO:0007669"/>
    <property type="project" value="UniProtKB-UniRule"/>
</dbReference>
<dbReference type="GO" id="GO:0045892">
    <property type="term" value="P:negative regulation of DNA-templated transcription"/>
    <property type="evidence" value="ECO:0007669"/>
    <property type="project" value="InterPro"/>
</dbReference>
<dbReference type="GO" id="GO:0051775">
    <property type="term" value="P:response to redox state"/>
    <property type="evidence" value="ECO:0007669"/>
    <property type="project" value="InterPro"/>
</dbReference>
<dbReference type="Gene3D" id="3.40.50.720">
    <property type="entry name" value="NAD(P)-binding Rossmann-like Domain"/>
    <property type="match status" value="1"/>
</dbReference>
<dbReference type="Gene3D" id="1.10.10.10">
    <property type="entry name" value="Winged helix-like DNA-binding domain superfamily/Winged helix DNA-binding domain"/>
    <property type="match status" value="1"/>
</dbReference>
<dbReference type="HAMAP" id="MF_01131">
    <property type="entry name" value="Rex"/>
    <property type="match status" value="1"/>
</dbReference>
<dbReference type="InterPro" id="IPR003781">
    <property type="entry name" value="CoA-bd"/>
</dbReference>
<dbReference type="InterPro" id="IPR036291">
    <property type="entry name" value="NAD(P)-bd_dom_sf"/>
</dbReference>
<dbReference type="InterPro" id="IPR009718">
    <property type="entry name" value="Rex_DNA-bd_C_dom"/>
</dbReference>
<dbReference type="InterPro" id="IPR022876">
    <property type="entry name" value="Tscrpt_rep_Rex"/>
</dbReference>
<dbReference type="InterPro" id="IPR036388">
    <property type="entry name" value="WH-like_DNA-bd_sf"/>
</dbReference>
<dbReference type="InterPro" id="IPR036390">
    <property type="entry name" value="WH_DNA-bd_sf"/>
</dbReference>
<dbReference type="NCBIfam" id="NF003989">
    <property type="entry name" value="PRK05472.1-3"/>
    <property type="match status" value="1"/>
</dbReference>
<dbReference type="NCBIfam" id="NF003991">
    <property type="entry name" value="PRK05472.1-5"/>
    <property type="match status" value="1"/>
</dbReference>
<dbReference type="NCBIfam" id="NF003994">
    <property type="entry name" value="PRK05472.2-3"/>
    <property type="match status" value="1"/>
</dbReference>
<dbReference type="NCBIfam" id="NF003995">
    <property type="entry name" value="PRK05472.2-4"/>
    <property type="match status" value="1"/>
</dbReference>
<dbReference type="NCBIfam" id="NF003996">
    <property type="entry name" value="PRK05472.2-5"/>
    <property type="match status" value="1"/>
</dbReference>
<dbReference type="PANTHER" id="PTHR35786">
    <property type="entry name" value="REDOX-SENSING TRANSCRIPTIONAL REPRESSOR REX"/>
    <property type="match status" value="1"/>
</dbReference>
<dbReference type="PANTHER" id="PTHR35786:SF1">
    <property type="entry name" value="REDOX-SENSING TRANSCRIPTIONAL REPRESSOR REX 1"/>
    <property type="match status" value="1"/>
</dbReference>
<dbReference type="Pfam" id="PF02629">
    <property type="entry name" value="CoA_binding"/>
    <property type="match status" value="1"/>
</dbReference>
<dbReference type="Pfam" id="PF06971">
    <property type="entry name" value="Put_DNA-bind_N"/>
    <property type="match status" value="1"/>
</dbReference>
<dbReference type="SMART" id="SM00881">
    <property type="entry name" value="CoA_binding"/>
    <property type="match status" value="1"/>
</dbReference>
<dbReference type="SUPFAM" id="SSF51735">
    <property type="entry name" value="NAD(P)-binding Rossmann-fold domains"/>
    <property type="match status" value="1"/>
</dbReference>
<dbReference type="SUPFAM" id="SSF46785">
    <property type="entry name" value="Winged helix' DNA-binding domain"/>
    <property type="match status" value="1"/>
</dbReference>
<feature type="chain" id="PRO_1000065389" description="Redox-sensing transcriptional repressor Rex">
    <location>
        <begin position="1"/>
        <end position="215"/>
    </location>
</feature>
<feature type="DNA-binding region" description="H-T-H motif" evidence="1">
    <location>
        <begin position="18"/>
        <end position="57"/>
    </location>
</feature>
<feature type="binding site" evidence="1">
    <location>
        <begin position="92"/>
        <end position="97"/>
    </location>
    <ligand>
        <name>NAD(+)</name>
        <dbReference type="ChEBI" id="CHEBI:57540"/>
    </ligand>
</feature>
<comment type="function">
    <text evidence="1">Modulates transcription in response to changes in cellular NADH/NAD(+) redox state.</text>
</comment>
<comment type="subunit">
    <text evidence="1">Homodimer.</text>
</comment>
<comment type="subcellular location">
    <subcellularLocation>
        <location evidence="1">Cytoplasm</location>
    </subcellularLocation>
</comment>
<comment type="similarity">
    <text evidence="1">Belongs to the transcriptional regulatory Rex family.</text>
</comment>
<reference key="1">
    <citation type="journal article" date="2004" name="J. Mol. Microbiol. Biotechnol.">
        <title>The complete genome sequence of Bacillus licheniformis DSM13, an organism with great industrial potential.</title>
        <authorList>
            <person name="Veith B."/>
            <person name="Herzberg C."/>
            <person name="Steckel S."/>
            <person name="Feesche J."/>
            <person name="Maurer K.H."/>
            <person name="Ehrenreich P."/>
            <person name="Baeumer S."/>
            <person name="Henne A."/>
            <person name="Liesegang H."/>
            <person name="Merkl R."/>
            <person name="Ehrenreich A."/>
            <person name="Gottschalk G."/>
        </authorList>
    </citation>
    <scope>NUCLEOTIDE SEQUENCE [LARGE SCALE GENOMIC DNA]</scope>
    <source>
        <strain>ATCC 14580 / DSM 13 / JCM 2505 / CCUG 7422 / NBRC 12200 / NCIMB 9375 / NCTC 10341 / NRRL NRS-1264 / Gibson 46</strain>
    </source>
</reference>
<reference key="2">
    <citation type="journal article" date="2004" name="Genome Biol.">
        <title>Complete genome sequence of the industrial bacterium Bacillus licheniformis and comparisons with closely related Bacillus species.</title>
        <authorList>
            <person name="Rey M.W."/>
            <person name="Ramaiya P."/>
            <person name="Nelson B.A."/>
            <person name="Brody-Karpin S.D."/>
            <person name="Zaretsky E.J."/>
            <person name="Tang M."/>
            <person name="Lopez de Leon A."/>
            <person name="Xiang H."/>
            <person name="Gusti V."/>
            <person name="Clausen I.G."/>
            <person name="Olsen P.B."/>
            <person name="Rasmussen M.D."/>
            <person name="Andersen J.T."/>
            <person name="Joergensen P.L."/>
            <person name="Larsen T.S."/>
            <person name="Sorokin A."/>
            <person name="Bolotin A."/>
            <person name="Lapidus A."/>
            <person name="Galleron N."/>
            <person name="Ehrlich S.D."/>
            <person name="Berka R.M."/>
        </authorList>
    </citation>
    <scope>NUCLEOTIDE SEQUENCE [LARGE SCALE GENOMIC DNA]</scope>
    <source>
        <strain>ATCC 14580 / DSM 13 / JCM 2505 / CCUG 7422 / NBRC 12200 / NCIMB 9375 / NCTC 10341 / NRRL NRS-1264 / Gibson 46</strain>
    </source>
</reference>
<organism>
    <name type="scientific">Bacillus licheniformis (strain ATCC 14580 / DSM 13 / JCM 2505 / CCUG 7422 / NBRC 12200 / NCIMB 9375 / NCTC 10341 / NRRL NRS-1264 / Gibson 46)</name>
    <dbReference type="NCBI Taxonomy" id="279010"/>
    <lineage>
        <taxon>Bacteria</taxon>
        <taxon>Bacillati</taxon>
        <taxon>Bacillota</taxon>
        <taxon>Bacilli</taxon>
        <taxon>Bacillales</taxon>
        <taxon>Bacillaceae</taxon>
        <taxon>Bacillus</taxon>
    </lineage>
</organism>
<sequence length="215" mass="24174">MNMDHSKIPQATAKRLPLYYRFLKNLHASGKQRVSSAELSDAVKVDSATIRRDFSYFGALGKKGYGYNVNYLLSFFRKTLDQDETTNVTLIGVGNLGTAFLHYNFIKNNNTKIAMAFDINEEKIGTEVGGVPVYDLNKLEEHMTDDDIPVAILTVPAQAAQSITDRLVALGIKGILNFTPARLNVPEHIRIHHIDLAVELQSLVYFLKHYSMQEK</sequence>
<accession>Q65N04</accession>
<accession>Q62YF1</accession>
<name>REX_BACLD</name>
<gene>
    <name evidence="1" type="primary">rex</name>
    <name type="ordered locus">BLi00618</name>
    <name type="ordered locus">BL00847</name>
</gene>
<keyword id="KW-0963">Cytoplasm</keyword>
<keyword id="KW-0238">DNA-binding</keyword>
<keyword id="KW-0520">NAD</keyword>
<keyword id="KW-1185">Reference proteome</keyword>
<keyword id="KW-0678">Repressor</keyword>
<keyword id="KW-0804">Transcription</keyword>
<keyword id="KW-0805">Transcription regulation</keyword>
<proteinExistence type="inferred from homology"/>